<sequence>MAREFSLPNTRNIGIMAHIDAGKTTTTERILFYTGRVHKIGEVHEGAATMDWMEQEQERGITITSAATTAQWNGHRINIIDTPGHVDFTVEVERSLRVLDGAVTVFDAKGGVEPQTETVWRQADRYGVPRMCYINKMDIMGANFDMCLGQIKSRLGANPVAIQYPIGAEDQFKGMVDLIEMKAIVYTDDLGKTSDSAEIPADLLARCEELRMAMVEAAAEQDEELMMKYLEGEELTNDEIRAALRKGTIDCKLTPVMCGSSYKNKGVQPMLDNVVAYLPSPVDIPAIKGTLPDTEDEVDRPADDNGPFSALAFKIMTDPYVGRLTFFRVYSGVLNSGSYVLNSTKGKRERVGRILQMHANHREEITTVYSGDIAAAVGLKDTTTGDTLCDEKAPVILESMDFPEPVISVAIEPKSKADQDKMGIGLSKLAEEDPTFRTRTDEETGQTIISGMGELHLEIIVDRLKREFKVESNVGAPQVAYRETFRNAAKVEGKFVRQSGGRGQYGHVWVEFAPLEAGQGFQFENKIVGGVVPREYIPAVQAGIEESMKNGVIAGFPLVDIKATIVDGSYHDVDSNEMAFKVAGSLALKEAAKKCGAVLLEPIMKVEVTMPEEYMGDVMGDLNSRRGRIEGMEARANAQVIRAMVPLSEMFGYSTILRSRTQGRGVYSMVIDHYEEVPKFIAEEIIKKSKGE</sequence>
<gene>
    <name evidence="1" type="primary">fusA</name>
    <name type="ordered locus">BBR47_02160</name>
</gene>
<proteinExistence type="inferred from homology"/>
<accession>C0ZIH5</accession>
<reference key="1">
    <citation type="submission" date="2005-03" db="EMBL/GenBank/DDBJ databases">
        <title>Brevibacillus brevis strain 47, complete genome.</title>
        <authorList>
            <person name="Hosoyama A."/>
            <person name="Yamada R."/>
            <person name="Hongo Y."/>
            <person name="Terui Y."/>
            <person name="Ankai A."/>
            <person name="Masuyama W."/>
            <person name="Sekiguchi M."/>
            <person name="Takeda T."/>
            <person name="Asano K."/>
            <person name="Ohji S."/>
            <person name="Ichikawa N."/>
            <person name="Narita S."/>
            <person name="Aoki N."/>
            <person name="Miura H."/>
            <person name="Matsushita S."/>
            <person name="Sekigawa T."/>
            <person name="Yamagata H."/>
            <person name="Yoshikawa H."/>
            <person name="Udaka S."/>
            <person name="Tanikawa S."/>
            <person name="Fujita N."/>
        </authorList>
    </citation>
    <scope>NUCLEOTIDE SEQUENCE [LARGE SCALE GENOMIC DNA]</scope>
    <source>
        <strain>47 / JCM 6285 / NBRC 100599</strain>
    </source>
</reference>
<protein>
    <recommendedName>
        <fullName evidence="1">Elongation factor G</fullName>
        <shortName evidence="1">EF-G</shortName>
    </recommendedName>
</protein>
<feature type="chain" id="PRO_1000201441" description="Elongation factor G">
    <location>
        <begin position="1"/>
        <end position="692"/>
    </location>
</feature>
<feature type="domain" description="tr-type G">
    <location>
        <begin position="8"/>
        <end position="282"/>
    </location>
</feature>
<feature type="binding site" evidence="1">
    <location>
        <begin position="17"/>
        <end position="24"/>
    </location>
    <ligand>
        <name>GTP</name>
        <dbReference type="ChEBI" id="CHEBI:37565"/>
    </ligand>
</feature>
<feature type="binding site" evidence="1">
    <location>
        <begin position="81"/>
        <end position="85"/>
    </location>
    <ligand>
        <name>GTP</name>
        <dbReference type="ChEBI" id="CHEBI:37565"/>
    </ligand>
</feature>
<feature type="binding site" evidence="1">
    <location>
        <begin position="135"/>
        <end position="138"/>
    </location>
    <ligand>
        <name>GTP</name>
        <dbReference type="ChEBI" id="CHEBI:37565"/>
    </ligand>
</feature>
<name>EFG_BREBN</name>
<organism>
    <name type="scientific">Brevibacillus brevis (strain 47 / JCM 6285 / NBRC 100599)</name>
    <dbReference type="NCBI Taxonomy" id="358681"/>
    <lineage>
        <taxon>Bacteria</taxon>
        <taxon>Bacillati</taxon>
        <taxon>Bacillota</taxon>
        <taxon>Bacilli</taxon>
        <taxon>Bacillales</taxon>
        <taxon>Paenibacillaceae</taxon>
        <taxon>Brevibacillus</taxon>
    </lineage>
</organism>
<evidence type="ECO:0000255" key="1">
    <source>
        <dbReference type="HAMAP-Rule" id="MF_00054"/>
    </source>
</evidence>
<dbReference type="EMBL" id="AP008955">
    <property type="protein sequence ID" value="BAH41193.1"/>
    <property type="molecule type" value="Genomic_DNA"/>
</dbReference>
<dbReference type="RefSeq" id="WP_012683979.1">
    <property type="nucleotide sequence ID" value="NC_012491.1"/>
</dbReference>
<dbReference type="SMR" id="C0ZIH5"/>
<dbReference type="STRING" id="358681.BBR47_02160"/>
<dbReference type="KEGG" id="bbe:BBR47_02160"/>
<dbReference type="eggNOG" id="COG0480">
    <property type="taxonomic scope" value="Bacteria"/>
</dbReference>
<dbReference type="HOGENOM" id="CLU_002794_4_1_9"/>
<dbReference type="Proteomes" id="UP000001877">
    <property type="component" value="Chromosome"/>
</dbReference>
<dbReference type="GO" id="GO:0005737">
    <property type="term" value="C:cytoplasm"/>
    <property type="evidence" value="ECO:0007669"/>
    <property type="project" value="UniProtKB-SubCell"/>
</dbReference>
<dbReference type="GO" id="GO:0005525">
    <property type="term" value="F:GTP binding"/>
    <property type="evidence" value="ECO:0007669"/>
    <property type="project" value="UniProtKB-UniRule"/>
</dbReference>
<dbReference type="GO" id="GO:0003924">
    <property type="term" value="F:GTPase activity"/>
    <property type="evidence" value="ECO:0007669"/>
    <property type="project" value="InterPro"/>
</dbReference>
<dbReference type="GO" id="GO:0003746">
    <property type="term" value="F:translation elongation factor activity"/>
    <property type="evidence" value="ECO:0007669"/>
    <property type="project" value="UniProtKB-UniRule"/>
</dbReference>
<dbReference type="GO" id="GO:0032790">
    <property type="term" value="P:ribosome disassembly"/>
    <property type="evidence" value="ECO:0007669"/>
    <property type="project" value="TreeGrafter"/>
</dbReference>
<dbReference type="CDD" id="cd01886">
    <property type="entry name" value="EF-G"/>
    <property type="match status" value="1"/>
</dbReference>
<dbReference type="CDD" id="cd16262">
    <property type="entry name" value="EFG_III"/>
    <property type="match status" value="1"/>
</dbReference>
<dbReference type="CDD" id="cd01434">
    <property type="entry name" value="EFG_mtEFG1_IV"/>
    <property type="match status" value="1"/>
</dbReference>
<dbReference type="CDD" id="cd03713">
    <property type="entry name" value="EFG_mtEFG_C"/>
    <property type="match status" value="1"/>
</dbReference>
<dbReference type="CDD" id="cd04088">
    <property type="entry name" value="EFG_mtEFG_II"/>
    <property type="match status" value="1"/>
</dbReference>
<dbReference type="FunFam" id="2.40.30.10:FF:000006">
    <property type="entry name" value="Elongation factor G"/>
    <property type="match status" value="1"/>
</dbReference>
<dbReference type="FunFam" id="3.30.230.10:FF:000003">
    <property type="entry name" value="Elongation factor G"/>
    <property type="match status" value="1"/>
</dbReference>
<dbReference type="FunFam" id="3.30.70.240:FF:000001">
    <property type="entry name" value="Elongation factor G"/>
    <property type="match status" value="1"/>
</dbReference>
<dbReference type="FunFam" id="3.30.70.870:FF:000001">
    <property type="entry name" value="Elongation factor G"/>
    <property type="match status" value="1"/>
</dbReference>
<dbReference type="FunFam" id="3.40.50.300:FF:000029">
    <property type="entry name" value="Elongation factor G"/>
    <property type="match status" value="1"/>
</dbReference>
<dbReference type="Gene3D" id="3.30.230.10">
    <property type="match status" value="1"/>
</dbReference>
<dbReference type="Gene3D" id="3.30.70.240">
    <property type="match status" value="1"/>
</dbReference>
<dbReference type="Gene3D" id="3.30.70.870">
    <property type="entry name" value="Elongation Factor G (Translational Gtpase), domain 3"/>
    <property type="match status" value="1"/>
</dbReference>
<dbReference type="Gene3D" id="3.40.50.300">
    <property type="entry name" value="P-loop containing nucleotide triphosphate hydrolases"/>
    <property type="match status" value="1"/>
</dbReference>
<dbReference type="Gene3D" id="2.40.30.10">
    <property type="entry name" value="Translation factors"/>
    <property type="match status" value="1"/>
</dbReference>
<dbReference type="HAMAP" id="MF_00054_B">
    <property type="entry name" value="EF_G_EF_2_B"/>
    <property type="match status" value="1"/>
</dbReference>
<dbReference type="InterPro" id="IPR053905">
    <property type="entry name" value="EF-G-like_DII"/>
</dbReference>
<dbReference type="InterPro" id="IPR041095">
    <property type="entry name" value="EFG_II"/>
</dbReference>
<dbReference type="InterPro" id="IPR009022">
    <property type="entry name" value="EFG_III"/>
</dbReference>
<dbReference type="InterPro" id="IPR035647">
    <property type="entry name" value="EFG_III/V"/>
</dbReference>
<dbReference type="InterPro" id="IPR047872">
    <property type="entry name" value="EFG_IV"/>
</dbReference>
<dbReference type="InterPro" id="IPR035649">
    <property type="entry name" value="EFG_V"/>
</dbReference>
<dbReference type="InterPro" id="IPR000640">
    <property type="entry name" value="EFG_V-like"/>
</dbReference>
<dbReference type="InterPro" id="IPR031157">
    <property type="entry name" value="G_TR_CS"/>
</dbReference>
<dbReference type="InterPro" id="IPR027417">
    <property type="entry name" value="P-loop_NTPase"/>
</dbReference>
<dbReference type="InterPro" id="IPR020568">
    <property type="entry name" value="Ribosomal_Su5_D2-typ_SF"/>
</dbReference>
<dbReference type="InterPro" id="IPR014721">
    <property type="entry name" value="Ribsml_uS5_D2-typ_fold_subgr"/>
</dbReference>
<dbReference type="InterPro" id="IPR005225">
    <property type="entry name" value="Small_GTP-bd"/>
</dbReference>
<dbReference type="InterPro" id="IPR000795">
    <property type="entry name" value="T_Tr_GTP-bd_dom"/>
</dbReference>
<dbReference type="InterPro" id="IPR009000">
    <property type="entry name" value="Transl_B-barrel_sf"/>
</dbReference>
<dbReference type="InterPro" id="IPR004540">
    <property type="entry name" value="Transl_elong_EFG/EF2"/>
</dbReference>
<dbReference type="InterPro" id="IPR005517">
    <property type="entry name" value="Transl_elong_EFG/EF2_IV"/>
</dbReference>
<dbReference type="NCBIfam" id="TIGR00484">
    <property type="entry name" value="EF-G"/>
    <property type="match status" value="1"/>
</dbReference>
<dbReference type="NCBIfam" id="NF009379">
    <property type="entry name" value="PRK12740.1-3"/>
    <property type="match status" value="1"/>
</dbReference>
<dbReference type="NCBIfam" id="NF009381">
    <property type="entry name" value="PRK12740.1-5"/>
    <property type="match status" value="1"/>
</dbReference>
<dbReference type="NCBIfam" id="TIGR00231">
    <property type="entry name" value="small_GTP"/>
    <property type="match status" value="1"/>
</dbReference>
<dbReference type="PANTHER" id="PTHR43261:SF1">
    <property type="entry name" value="RIBOSOME-RELEASING FACTOR 2, MITOCHONDRIAL"/>
    <property type="match status" value="1"/>
</dbReference>
<dbReference type="PANTHER" id="PTHR43261">
    <property type="entry name" value="TRANSLATION ELONGATION FACTOR G-RELATED"/>
    <property type="match status" value="1"/>
</dbReference>
<dbReference type="Pfam" id="PF22042">
    <property type="entry name" value="EF-G_D2"/>
    <property type="match status" value="1"/>
</dbReference>
<dbReference type="Pfam" id="PF00679">
    <property type="entry name" value="EFG_C"/>
    <property type="match status" value="1"/>
</dbReference>
<dbReference type="Pfam" id="PF14492">
    <property type="entry name" value="EFG_III"/>
    <property type="match status" value="1"/>
</dbReference>
<dbReference type="Pfam" id="PF03764">
    <property type="entry name" value="EFG_IV"/>
    <property type="match status" value="1"/>
</dbReference>
<dbReference type="Pfam" id="PF00009">
    <property type="entry name" value="GTP_EFTU"/>
    <property type="match status" value="1"/>
</dbReference>
<dbReference type="PRINTS" id="PR00315">
    <property type="entry name" value="ELONGATNFCT"/>
</dbReference>
<dbReference type="SMART" id="SM00838">
    <property type="entry name" value="EFG_C"/>
    <property type="match status" value="1"/>
</dbReference>
<dbReference type="SMART" id="SM00889">
    <property type="entry name" value="EFG_IV"/>
    <property type="match status" value="1"/>
</dbReference>
<dbReference type="SUPFAM" id="SSF54980">
    <property type="entry name" value="EF-G C-terminal domain-like"/>
    <property type="match status" value="2"/>
</dbReference>
<dbReference type="SUPFAM" id="SSF52540">
    <property type="entry name" value="P-loop containing nucleoside triphosphate hydrolases"/>
    <property type="match status" value="1"/>
</dbReference>
<dbReference type="SUPFAM" id="SSF54211">
    <property type="entry name" value="Ribosomal protein S5 domain 2-like"/>
    <property type="match status" value="1"/>
</dbReference>
<dbReference type="SUPFAM" id="SSF50447">
    <property type="entry name" value="Translation proteins"/>
    <property type="match status" value="1"/>
</dbReference>
<dbReference type="PROSITE" id="PS00301">
    <property type="entry name" value="G_TR_1"/>
    <property type="match status" value="1"/>
</dbReference>
<dbReference type="PROSITE" id="PS51722">
    <property type="entry name" value="G_TR_2"/>
    <property type="match status" value="1"/>
</dbReference>
<comment type="function">
    <text evidence="1">Catalyzes the GTP-dependent ribosomal translocation step during translation elongation. During this step, the ribosome changes from the pre-translocational (PRE) to the post-translocational (POST) state as the newly formed A-site-bound peptidyl-tRNA and P-site-bound deacylated tRNA move to the P and E sites, respectively. Catalyzes the coordinated movement of the two tRNA molecules, the mRNA and conformational changes in the ribosome.</text>
</comment>
<comment type="subcellular location">
    <subcellularLocation>
        <location evidence="1">Cytoplasm</location>
    </subcellularLocation>
</comment>
<comment type="similarity">
    <text evidence="1">Belongs to the TRAFAC class translation factor GTPase superfamily. Classic translation factor GTPase family. EF-G/EF-2 subfamily.</text>
</comment>
<keyword id="KW-0963">Cytoplasm</keyword>
<keyword id="KW-0251">Elongation factor</keyword>
<keyword id="KW-0342">GTP-binding</keyword>
<keyword id="KW-0547">Nucleotide-binding</keyword>
<keyword id="KW-0648">Protein biosynthesis</keyword>
<keyword id="KW-1185">Reference proteome</keyword>